<dbReference type="EC" id="3.1.-.-" evidence="4"/>
<dbReference type="EMBL" id="AK051360">
    <property type="protein sequence ID" value="BAC34614.1"/>
    <property type="molecule type" value="mRNA"/>
</dbReference>
<dbReference type="EMBL" id="AK138171">
    <property type="protein sequence ID" value="BAE23568.1"/>
    <property type="molecule type" value="mRNA"/>
</dbReference>
<dbReference type="EMBL" id="AC121980">
    <property type="status" value="NOT_ANNOTATED_CDS"/>
    <property type="molecule type" value="Genomic_DNA"/>
</dbReference>
<dbReference type="EMBL" id="AC124538">
    <property type="status" value="NOT_ANNOTATED_CDS"/>
    <property type="molecule type" value="Genomic_DNA"/>
</dbReference>
<dbReference type="CCDS" id="CCDS48260.1">
    <molecule id="Q3UUQ7-1"/>
</dbReference>
<dbReference type="RefSeq" id="NP_001156786.1">
    <molecule id="Q3UUQ7-1"/>
    <property type="nucleotide sequence ID" value="NM_001163314.2"/>
</dbReference>
<dbReference type="SMR" id="Q3UUQ7"/>
<dbReference type="BioGRID" id="232269">
    <property type="interactions" value="1"/>
</dbReference>
<dbReference type="FunCoup" id="Q3UUQ7">
    <property type="interactions" value="1868"/>
</dbReference>
<dbReference type="STRING" id="10090.ENSMUSP00000095346"/>
<dbReference type="ChEMBL" id="CHEMBL3259507"/>
<dbReference type="ESTHER" id="mouse-q3uuq7">
    <property type="family name" value="PGAP1"/>
</dbReference>
<dbReference type="GlyConnect" id="2359">
    <property type="glycosylation" value="5 N-Linked glycans (2 sites)"/>
</dbReference>
<dbReference type="GlyCosmos" id="Q3UUQ7">
    <property type="glycosylation" value="4 sites, 5 glycans"/>
</dbReference>
<dbReference type="GlyGen" id="Q3UUQ7">
    <property type="glycosylation" value="4 sites, 8 N-linked glycans (4 sites)"/>
</dbReference>
<dbReference type="iPTMnet" id="Q3UUQ7"/>
<dbReference type="PhosphoSitePlus" id="Q3UUQ7"/>
<dbReference type="PaxDb" id="10090-ENSMUSP00000095346"/>
<dbReference type="PeptideAtlas" id="Q3UUQ7"/>
<dbReference type="ProteomicsDB" id="301796">
    <molecule id="Q3UUQ7-1"/>
</dbReference>
<dbReference type="Pumba" id="Q3UUQ7"/>
<dbReference type="Antibodypedia" id="34062">
    <property type="antibodies" value="35 antibodies from 14 providers"/>
</dbReference>
<dbReference type="Ensembl" id="ENSMUST00000097739.5">
    <molecule id="Q3UUQ7-1"/>
    <property type="protein sequence ID" value="ENSMUSP00000095346.4"/>
    <property type="gene ID" value="ENSMUSG00000073678.5"/>
</dbReference>
<dbReference type="GeneID" id="241062"/>
<dbReference type="KEGG" id="mmu:241062"/>
<dbReference type="UCSC" id="uc011wky.2">
    <molecule id="Q3UUQ7-1"/>
    <property type="organism name" value="mouse"/>
</dbReference>
<dbReference type="AGR" id="MGI:2443342"/>
<dbReference type="CTD" id="80055"/>
<dbReference type="MGI" id="MGI:2443342">
    <property type="gene designation" value="Pgap1"/>
</dbReference>
<dbReference type="VEuPathDB" id="HostDB:ENSMUSG00000073678"/>
<dbReference type="eggNOG" id="KOG3724">
    <property type="taxonomic scope" value="Eukaryota"/>
</dbReference>
<dbReference type="GeneTree" id="ENSGT00390000016484"/>
<dbReference type="HOGENOM" id="CLU_013735_1_0_1"/>
<dbReference type="InParanoid" id="Q3UUQ7"/>
<dbReference type="OMA" id="YGLYYYY"/>
<dbReference type="OrthoDB" id="348976at2759"/>
<dbReference type="PhylomeDB" id="Q3UUQ7"/>
<dbReference type="TreeFam" id="TF314565"/>
<dbReference type="Reactome" id="R-MMU-162791">
    <property type="pathway name" value="Attachment of GPI anchor to uPAR"/>
</dbReference>
<dbReference type="BioGRID-ORCS" id="241062">
    <property type="hits" value="7 hits in 80 CRISPR screens"/>
</dbReference>
<dbReference type="PRO" id="PR:Q3UUQ7"/>
<dbReference type="Proteomes" id="UP000000589">
    <property type="component" value="Chromosome 1"/>
</dbReference>
<dbReference type="RNAct" id="Q3UUQ7">
    <property type="molecule type" value="protein"/>
</dbReference>
<dbReference type="Bgee" id="ENSMUSG00000073678">
    <property type="expression patterns" value="Expressed in epithelium of small intestine and 218 other cell types or tissues"/>
</dbReference>
<dbReference type="GO" id="GO:0005783">
    <property type="term" value="C:endoplasmic reticulum"/>
    <property type="evidence" value="ECO:0000250"/>
    <property type="project" value="UniProtKB"/>
</dbReference>
<dbReference type="GO" id="GO:0005789">
    <property type="term" value="C:endoplasmic reticulum membrane"/>
    <property type="evidence" value="ECO:0007669"/>
    <property type="project" value="UniProtKB-SubCell"/>
</dbReference>
<dbReference type="GO" id="GO:0160215">
    <property type="term" value="F:deacylase activity"/>
    <property type="evidence" value="ECO:0000250"/>
    <property type="project" value="UniProtKB"/>
</dbReference>
<dbReference type="GO" id="GO:0016788">
    <property type="term" value="F:hydrolase activity, acting on ester bonds"/>
    <property type="evidence" value="ECO:0007669"/>
    <property type="project" value="InterPro"/>
</dbReference>
<dbReference type="GO" id="GO:0009948">
    <property type="term" value="P:anterior/posterior axis specification"/>
    <property type="evidence" value="ECO:0000315"/>
    <property type="project" value="MGI"/>
</dbReference>
<dbReference type="GO" id="GO:0009880">
    <property type="term" value="P:embryonic pattern specification"/>
    <property type="evidence" value="ECO:0000315"/>
    <property type="project" value="MGI"/>
</dbReference>
<dbReference type="GO" id="GO:0021871">
    <property type="term" value="P:forebrain regionalization"/>
    <property type="evidence" value="ECO:0000315"/>
    <property type="project" value="MGI"/>
</dbReference>
<dbReference type="GO" id="GO:0060322">
    <property type="term" value="P:head development"/>
    <property type="evidence" value="ECO:0000315"/>
    <property type="project" value="MGI"/>
</dbReference>
<dbReference type="GO" id="GO:1902953">
    <property type="term" value="P:positive regulation of ER to Golgi vesicle-mediated transport"/>
    <property type="evidence" value="ECO:0000250"/>
    <property type="project" value="UniProtKB"/>
</dbReference>
<dbReference type="GO" id="GO:0015031">
    <property type="term" value="P:protein transport"/>
    <property type="evidence" value="ECO:0007669"/>
    <property type="project" value="UniProtKB-KW"/>
</dbReference>
<dbReference type="GO" id="GO:0007605">
    <property type="term" value="P:sensory perception of sound"/>
    <property type="evidence" value="ECO:0000315"/>
    <property type="project" value="MGI"/>
</dbReference>
<dbReference type="FunFam" id="3.40.50.1820:FF:000026">
    <property type="entry name" value="GPI inositol-deacylase"/>
    <property type="match status" value="1"/>
</dbReference>
<dbReference type="Gene3D" id="3.40.50.1820">
    <property type="entry name" value="alpha/beta hydrolase"/>
    <property type="match status" value="1"/>
</dbReference>
<dbReference type="InterPro" id="IPR029058">
    <property type="entry name" value="AB_hydrolase_fold"/>
</dbReference>
<dbReference type="InterPro" id="IPR012908">
    <property type="entry name" value="PGAP1-ab_dom-like"/>
</dbReference>
<dbReference type="InterPro" id="IPR039529">
    <property type="entry name" value="PGAP1/BST1"/>
</dbReference>
<dbReference type="InterPro" id="IPR056824">
    <property type="entry name" value="PGAP1_TMD"/>
</dbReference>
<dbReference type="PANTHER" id="PTHR15495:SF7">
    <property type="entry name" value="GPI INOSITOL-DEACYLASE"/>
    <property type="match status" value="1"/>
</dbReference>
<dbReference type="PANTHER" id="PTHR15495">
    <property type="entry name" value="NEGATIVE REGULATOR OF VESICLE FORMATION-RELATED"/>
    <property type="match status" value="1"/>
</dbReference>
<dbReference type="Pfam" id="PF07819">
    <property type="entry name" value="PGAP1"/>
    <property type="match status" value="1"/>
</dbReference>
<dbReference type="Pfam" id="PF25141">
    <property type="entry name" value="PGAP1_2nd"/>
    <property type="match status" value="1"/>
</dbReference>
<dbReference type="Pfam" id="PF24660">
    <property type="entry name" value="PGAP1_3rd"/>
    <property type="match status" value="1"/>
</dbReference>
<dbReference type="Pfam" id="PF25140">
    <property type="entry name" value="PGAP1_TMD"/>
    <property type="match status" value="1"/>
</dbReference>
<dbReference type="SUPFAM" id="SSF53474">
    <property type="entry name" value="alpha/beta-Hydrolases"/>
    <property type="match status" value="1"/>
</dbReference>
<dbReference type="PROSITE" id="PS00120">
    <property type="entry name" value="LIPASE_SER"/>
    <property type="match status" value="1"/>
</dbReference>
<evidence type="ECO:0000250" key="1">
    <source>
        <dbReference type="UniProtKB" id="Q765A7"/>
    </source>
</evidence>
<evidence type="ECO:0000255" key="2"/>
<evidence type="ECO:0000256" key="3">
    <source>
        <dbReference type="SAM" id="MobiDB-lite"/>
    </source>
</evidence>
<evidence type="ECO:0000269" key="4">
    <source>
    </source>
</evidence>
<evidence type="ECO:0000269" key="5">
    <source>
    </source>
</evidence>
<evidence type="ECO:0000303" key="6">
    <source>
    </source>
</evidence>
<evidence type="ECO:0000305" key="7"/>
<evidence type="ECO:0000312" key="8">
    <source>
        <dbReference type="MGI" id="MGI:2443342"/>
    </source>
</evidence>
<accession>Q3UUQ7</accession>
<accession>E9QKG7</accession>
<accession>Q8BQ77</accession>
<gene>
    <name evidence="8" type="primary">Pgap1</name>
</gene>
<sequence>MFLHSVNLWNLAFYVFMVFLATLGLWDVFFGFEENKCSMSYMFEYPEYQKIELPKKLTKRYPAYELYLYGEGSYAEEHKILPLTGIPVLFLPGNAGSYKQVRSIGSIALRKAEDIDFKYHFDFFSVNFNEELVALYGGSLQKQTKFVHECIKAILKLYKGQEFAPTSVAIIGHSMGGLVARALLTLKNFKQDLINLLVTQATPHVAPVMPLDRFITEFYMNVNNYWILNARHINLTTLSVAGGFRDYQVRSGLTFLPKLSHYTSALSVVSSAVPKTWVSTDHLSIVWCKQLQLTTIRAFFDLIDADTKQITQKPKKKLSVLNHHFIRHPAKQFEENPSIISDLTGTSMWVPVKVSRWSYVAYNESDKIYFAFPLANHRKIYTHAYCQSTMLDTNSWIFGCINSTSMCRQGVDLSWKAELLPTIKSLTLRLQDYPSLSHIVVYVPSVHGSKFVVDCEFFKKEARSMQLPVTHLFSFGLSSRKVTLNTNGLYYNIELLNFGQIYQAFKVNVVSKCTGSKEEITSIYKLHIPWSYEDSLTIAQVPSSTDISLKLHVAQPENDSHVALLKMYTSSDCQYEVTIKTSFPQILGQVVRFHGGALPAYVVSSILLAYGGQLYSLLSTGYCLEYSTILDKEAKPYKVDPFVIMIKFLLGYKWFKELWDAVLLPELDAIVLTSQSMCFPLVSLILFLFGTCTAYWSGLLSSTSVQLLSSLWLALKRPAELPKDIKVMSPDLPVLTVVFLIVSWTTCGALAILLSYLYYVFKVVHLQASLTTFKNNQPVNPKHSRRSEKKSNHHKDSAVQSLRLCANDAEDSLRMHSTVINLLTWVVLLSMPSLIYWLKNLRYYFKLSPDPCKPLAFLLIPAIAILGNTHTVSVKSSKLLKTVSQFPLPLAVGVIAFGSSHLYRVPCFVIIPLVFHALCNFM</sequence>
<feature type="chain" id="PRO_0000277624" description="GPI inositol-deacylase">
    <location>
        <begin position="1"/>
        <end position="922"/>
    </location>
</feature>
<feature type="topological domain" description="Cytoplasmic" evidence="1">
    <location>
        <begin position="1"/>
        <end position="11"/>
    </location>
</feature>
<feature type="transmembrane region" description="Helical" evidence="2">
    <location>
        <begin position="12"/>
        <end position="32"/>
    </location>
</feature>
<feature type="topological domain" description="Lumenal" evidence="1">
    <location>
        <begin position="33"/>
        <end position="597"/>
    </location>
</feature>
<feature type="transmembrane region" description="Helical" evidence="2">
    <location>
        <begin position="598"/>
        <end position="618"/>
    </location>
</feature>
<feature type="topological domain" description="Cytoplasmic" evidence="1">
    <location>
        <begin position="619"/>
        <end position="641"/>
    </location>
</feature>
<feature type="transmembrane region" description="Helical" evidence="2">
    <location>
        <begin position="642"/>
        <end position="662"/>
    </location>
</feature>
<feature type="topological domain" description="Lumenal" evidence="1">
    <location>
        <begin position="663"/>
        <end position="668"/>
    </location>
</feature>
<feature type="transmembrane region" description="Helical" evidence="2">
    <location>
        <begin position="669"/>
        <end position="689"/>
    </location>
</feature>
<feature type="topological domain" description="Cytoplasmic" evidence="1">
    <location>
        <begin position="690"/>
        <end position="694"/>
    </location>
</feature>
<feature type="transmembrane region" description="Helical" evidence="2">
    <location>
        <begin position="695"/>
        <end position="715"/>
    </location>
</feature>
<feature type="topological domain" description="Lumenal" evidence="1">
    <location>
        <begin position="716"/>
        <end position="733"/>
    </location>
</feature>
<feature type="transmembrane region" description="Helical" evidence="2">
    <location>
        <begin position="734"/>
        <end position="754"/>
    </location>
</feature>
<feature type="topological domain" description="Cytoplasmic" evidence="1">
    <location>
        <begin position="755"/>
        <end position="817"/>
    </location>
</feature>
<feature type="transmembrane region" description="Helical" evidence="2">
    <location>
        <begin position="818"/>
        <end position="838"/>
    </location>
</feature>
<feature type="topological domain" description="Lumenal" evidence="1">
    <location>
        <begin position="839"/>
        <end position="894"/>
    </location>
</feature>
<feature type="transmembrane region" description="Helical" evidence="2">
    <location>
        <begin position="895"/>
        <end position="915"/>
    </location>
</feature>
<feature type="topological domain" description="Cytoplasmic" evidence="1">
    <location>
        <begin position="916"/>
        <end position="922"/>
    </location>
</feature>
<feature type="region of interest" description="Disordered" evidence="3">
    <location>
        <begin position="776"/>
        <end position="798"/>
    </location>
</feature>
<feature type="compositionally biased region" description="Basic residues" evidence="3">
    <location>
        <begin position="782"/>
        <end position="793"/>
    </location>
</feature>
<feature type="active site" evidence="1">
    <location>
        <position position="174"/>
    </location>
</feature>
<feature type="glycosylation site" description="N-linked (GlcNAc...) asparagine" evidence="2">
    <location>
        <position position="363"/>
    </location>
</feature>
<feature type="glycosylation site" description="N-linked (GlcNAc...) asparagine" evidence="2">
    <location>
        <position position="402"/>
    </location>
</feature>
<feature type="glycosylation site" description="N-linked (GlcNAc...) asparagine" evidence="5">
    <location>
        <position position="558"/>
    </location>
</feature>
<feature type="splice variant" id="VSP_023045" description="In isoform 2." evidence="6">
    <original>KIELPKKLTKRYPAYELYLYGEGSYAEEHKILPLTGIPVLFLPGNAGSYKQVRSIGSIALRKAEDIDFKYHFDFFSVNFNEELVALYGGSLQKQTKFVHECIKAILKLYKGQEFAPT</original>
    <variation>VRPSLTCAPTPPGLLSGSDGTLRLGALLALEVSCFVLGRASSPPRPLVPHPDSGPRLLTAREPALVPLPNPYTSRTLLCLQGDDFSSRPVMGVRQISLFWKEAASCRVAKADLKKRL</variation>
    <location>
        <begin position="50"/>
        <end position="166"/>
    </location>
</feature>
<feature type="splice variant" id="VSP_023046" description="In isoform 2." evidence="6">
    <location>
        <begin position="167"/>
        <end position="922"/>
    </location>
</feature>
<feature type="sequence conflict" description="In Ref. 1; BAE23568." evidence="7" ref="1">
    <original>N</original>
    <variation>D</variation>
    <location>
        <position position="223"/>
    </location>
</feature>
<feature type="sequence conflict" description="In Ref. 1; BAE23568." evidence="7" ref="1">
    <original>E</original>
    <variation>V</variation>
    <location>
        <position position="576"/>
    </location>
</feature>
<proteinExistence type="evidence at protein level"/>
<comment type="function">
    <text evidence="4">GPI inositol-deacylase that catalyzes the remove of the acyl chain linked to the 2-OH position of inositol ring from the GPI-anchored protein (GPI-AP) in the endoplasmic reticulum (PubMed:17711852). Initiates the post-attachment remodeling phase of GPI-AP biogenesis and participates in endoplasmic reticulum (ER)-to-Golgi transport of GPI-anchored protein (PubMed:17711852).</text>
</comment>
<comment type="subcellular location">
    <subcellularLocation>
        <location evidence="1">Endoplasmic reticulum membrane</location>
        <topology evidence="1">Multi-pass membrane protein</topology>
    </subcellularLocation>
</comment>
<comment type="alternative products">
    <event type="alternative splicing"/>
    <isoform>
        <id>Q3UUQ7-1</id>
        <name>1</name>
        <sequence type="displayed"/>
    </isoform>
    <isoform>
        <id>Q3UUQ7-2</id>
        <name>2</name>
        <sequence type="described" ref="VSP_023045 VSP_023046"/>
    </isoform>
</comment>
<comment type="disruption phenotype">
    <text evidence="4">Homozygous knockout mice lacking Pgap1 show otocephaly and die right after birth (PubMed:17711852). However, some survived with growth retardation (PubMed:17711852). Homozygous male knockout mice show severely reduced fertility despite the capability of ejaculation (PubMed:17711852).</text>
</comment>
<comment type="similarity">
    <text evidence="7">Belongs to the GPI inositol-deacylase family.</text>
</comment>
<protein>
    <recommendedName>
        <fullName evidence="7">GPI inositol-deacylase</fullName>
        <ecNumber evidence="4">3.1.-.-</ecNumber>
    </recommendedName>
    <alternativeName>
        <fullName>Post-GPI attachment to proteins factor 1</fullName>
    </alternativeName>
</protein>
<reference key="1">
    <citation type="journal article" date="2005" name="Science">
        <title>The transcriptional landscape of the mammalian genome.</title>
        <authorList>
            <person name="Carninci P."/>
            <person name="Kasukawa T."/>
            <person name="Katayama S."/>
            <person name="Gough J."/>
            <person name="Frith M.C."/>
            <person name="Maeda N."/>
            <person name="Oyama R."/>
            <person name="Ravasi T."/>
            <person name="Lenhard B."/>
            <person name="Wells C."/>
            <person name="Kodzius R."/>
            <person name="Shimokawa K."/>
            <person name="Bajic V.B."/>
            <person name="Brenner S.E."/>
            <person name="Batalov S."/>
            <person name="Forrest A.R."/>
            <person name="Zavolan M."/>
            <person name="Davis M.J."/>
            <person name="Wilming L.G."/>
            <person name="Aidinis V."/>
            <person name="Allen J.E."/>
            <person name="Ambesi-Impiombato A."/>
            <person name="Apweiler R."/>
            <person name="Aturaliya R.N."/>
            <person name="Bailey T.L."/>
            <person name="Bansal M."/>
            <person name="Baxter L."/>
            <person name="Beisel K.W."/>
            <person name="Bersano T."/>
            <person name="Bono H."/>
            <person name="Chalk A.M."/>
            <person name="Chiu K.P."/>
            <person name="Choudhary V."/>
            <person name="Christoffels A."/>
            <person name="Clutterbuck D.R."/>
            <person name="Crowe M.L."/>
            <person name="Dalla E."/>
            <person name="Dalrymple B.P."/>
            <person name="de Bono B."/>
            <person name="Della Gatta G."/>
            <person name="di Bernardo D."/>
            <person name="Down T."/>
            <person name="Engstrom P."/>
            <person name="Fagiolini M."/>
            <person name="Faulkner G."/>
            <person name="Fletcher C.F."/>
            <person name="Fukushima T."/>
            <person name="Furuno M."/>
            <person name="Futaki S."/>
            <person name="Gariboldi M."/>
            <person name="Georgii-Hemming P."/>
            <person name="Gingeras T.R."/>
            <person name="Gojobori T."/>
            <person name="Green R.E."/>
            <person name="Gustincich S."/>
            <person name="Harbers M."/>
            <person name="Hayashi Y."/>
            <person name="Hensch T.K."/>
            <person name="Hirokawa N."/>
            <person name="Hill D."/>
            <person name="Huminiecki L."/>
            <person name="Iacono M."/>
            <person name="Ikeo K."/>
            <person name="Iwama A."/>
            <person name="Ishikawa T."/>
            <person name="Jakt M."/>
            <person name="Kanapin A."/>
            <person name="Katoh M."/>
            <person name="Kawasawa Y."/>
            <person name="Kelso J."/>
            <person name="Kitamura H."/>
            <person name="Kitano H."/>
            <person name="Kollias G."/>
            <person name="Krishnan S.P."/>
            <person name="Kruger A."/>
            <person name="Kummerfeld S.K."/>
            <person name="Kurochkin I.V."/>
            <person name="Lareau L.F."/>
            <person name="Lazarevic D."/>
            <person name="Lipovich L."/>
            <person name="Liu J."/>
            <person name="Liuni S."/>
            <person name="McWilliam S."/>
            <person name="Madan Babu M."/>
            <person name="Madera M."/>
            <person name="Marchionni L."/>
            <person name="Matsuda H."/>
            <person name="Matsuzawa S."/>
            <person name="Miki H."/>
            <person name="Mignone F."/>
            <person name="Miyake S."/>
            <person name="Morris K."/>
            <person name="Mottagui-Tabar S."/>
            <person name="Mulder N."/>
            <person name="Nakano N."/>
            <person name="Nakauchi H."/>
            <person name="Ng P."/>
            <person name="Nilsson R."/>
            <person name="Nishiguchi S."/>
            <person name="Nishikawa S."/>
            <person name="Nori F."/>
            <person name="Ohara O."/>
            <person name="Okazaki Y."/>
            <person name="Orlando V."/>
            <person name="Pang K.C."/>
            <person name="Pavan W.J."/>
            <person name="Pavesi G."/>
            <person name="Pesole G."/>
            <person name="Petrovsky N."/>
            <person name="Piazza S."/>
            <person name="Reed J."/>
            <person name="Reid J.F."/>
            <person name="Ring B.Z."/>
            <person name="Ringwald M."/>
            <person name="Rost B."/>
            <person name="Ruan Y."/>
            <person name="Salzberg S.L."/>
            <person name="Sandelin A."/>
            <person name="Schneider C."/>
            <person name="Schoenbach C."/>
            <person name="Sekiguchi K."/>
            <person name="Semple C.A."/>
            <person name="Seno S."/>
            <person name="Sessa L."/>
            <person name="Sheng Y."/>
            <person name="Shibata Y."/>
            <person name="Shimada H."/>
            <person name="Shimada K."/>
            <person name="Silva D."/>
            <person name="Sinclair B."/>
            <person name="Sperling S."/>
            <person name="Stupka E."/>
            <person name="Sugiura K."/>
            <person name="Sultana R."/>
            <person name="Takenaka Y."/>
            <person name="Taki K."/>
            <person name="Tammoja K."/>
            <person name="Tan S.L."/>
            <person name="Tang S."/>
            <person name="Taylor M.S."/>
            <person name="Tegner J."/>
            <person name="Teichmann S.A."/>
            <person name="Ueda H.R."/>
            <person name="van Nimwegen E."/>
            <person name="Verardo R."/>
            <person name="Wei C.L."/>
            <person name="Yagi K."/>
            <person name="Yamanishi H."/>
            <person name="Zabarovsky E."/>
            <person name="Zhu S."/>
            <person name="Zimmer A."/>
            <person name="Hide W."/>
            <person name="Bult C."/>
            <person name="Grimmond S.M."/>
            <person name="Teasdale R.D."/>
            <person name="Liu E.T."/>
            <person name="Brusic V."/>
            <person name="Quackenbush J."/>
            <person name="Wahlestedt C."/>
            <person name="Mattick J.S."/>
            <person name="Hume D.A."/>
            <person name="Kai C."/>
            <person name="Sasaki D."/>
            <person name="Tomaru Y."/>
            <person name="Fukuda S."/>
            <person name="Kanamori-Katayama M."/>
            <person name="Suzuki M."/>
            <person name="Aoki J."/>
            <person name="Arakawa T."/>
            <person name="Iida J."/>
            <person name="Imamura K."/>
            <person name="Itoh M."/>
            <person name="Kato T."/>
            <person name="Kawaji H."/>
            <person name="Kawagashira N."/>
            <person name="Kawashima T."/>
            <person name="Kojima M."/>
            <person name="Kondo S."/>
            <person name="Konno H."/>
            <person name="Nakano K."/>
            <person name="Ninomiya N."/>
            <person name="Nishio T."/>
            <person name="Okada M."/>
            <person name="Plessy C."/>
            <person name="Shibata K."/>
            <person name="Shiraki T."/>
            <person name="Suzuki S."/>
            <person name="Tagami M."/>
            <person name="Waki K."/>
            <person name="Watahiki A."/>
            <person name="Okamura-Oho Y."/>
            <person name="Suzuki H."/>
            <person name="Kawai J."/>
            <person name="Hayashizaki Y."/>
        </authorList>
    </citation>
    <scope>NUCLEOTIDE SEQUENCE [LARGE SCALE MRNA] (ISOFORM 2)</scope>
    <scope>NUCLEOTIDE SEQUENCE [LARGE SCALE MRNA] OF 1-784 (ISOFORM 1)</scope>
    <source>
        <strain>C57BL/6J</strain>
        <tissue>Hypothalamus</tissue>
        <tissue>Spinal ganglion</tissue>
    </source>
</reference>
<reference key="2">
    <citation type="journal article" date="2009" name="PLoS Biol.">
        <title>Lineage-specific biology revealed by a finished genome assembly of the mouse.</title>
        <authorList>
            <person name="Church D.M."/>
            <person name="Goodstadt L."/>
            <person name="Hillier L.W."/>
            <person name="Zody M.C."/>
            <person name="Goldstein S."/>
            <person name="She X."/>
            <person name="Bult C.J."/>
            <person name="Agarwala R."/>
            <person name="Cherry J.L."/>
            <person name="DiCuccio M."/>
            <person name="Hlavina W."/>
            <person name="Kapustin Y."/>
            <person name="Meric P."/>
            <person name="Maglott D."/>
            <person name="Birtle Z."/>
            <person name="Marques A.C."/>
            <person name="Graves T."/>
            <person name="Zhou S."/>
            <person name="Teague B."/>
            <person name="Potamousis K."/>
            <person name="Churas C."/>
            <person name="Place M."/>
            <person name="Herschleb J."/>
            <person name="Runnheim R."/>
            <person name="Forrest D."/>
            <person name="Amos-Landgraf J."/>
            <person name="Schwartz D.C."/>
            <person name="Cheng Z."/>
            <person name="Lindblad-Toh K."/>
            <person name="Eichler E.E."/>
            <person name="Ponting C.P."/>
        </authorList>
    </citation>
    <scope>NUCLEOTIDE SEQUENCE [LARGE SCALE GENOMIC DNA]</scope>
    <source>
        <strain>C57BL/6J</strain>
    </source>
</reference>
<reference key="3">
    <citation type="journal article" date="2007" name="J. Biol. Chem.">
        <title>PGAP1 knock-out mice show otocephaly and male infertility.</title>
        <authorList>
            <person name="Ueda Y."/>
            <person name="Yamaguchi R."/>
            <person name="Ikawa M."/>
            <person name="Okabe M."/>
            <person name="Morii E."/>
            <person name="Maeda Y."/>
            <person name="Kinoshita T."/>
        </authorList>
    </citation>
    <scope>DISRUPTION PHENOTYPE</scope>
    <scope>FUNCTION</scope>
    <scope>CATALYTIC ACTIVITY</scope>
</reference>
<reference key="4">
    <citation type="journal article" date="2009" name="Nat. Biotechnol.">
        <title>Mass-spectrometric identification and relative quantification of N-linked cell surface glycoproteins.</title>
        <authorList>
            <person name="Wollscheid B."/>
            <person name="Bausch-Fluck D."/>
            <person name="Henderson C."/>
            <person name="O'Brien R."/>
            <person name="Bibel M."/>
            <person name="Schiess R."/>
            <person name="Aebersold R."/>
            <person name="Watts J.D."/>
        </authorList>
    </citation>
    <scope>GLYCOSYLATION [LARGE SCALE ANALYSIS] AT ASN-558</scope>
</reference>
<reference key="5">
    <citation type="journal article" date="2010" name="Cell">
        <title>A tissue-specific atlas of mouse protein phosphorylation and expression.</title>
        <authorList>
            <person name="Huttlin E.L."/>
            <person name="Jedrychowski M.P."/>
            <person name="Elias J.E."/>
            <person name="Goswami T."/>
            <person name="Rad R."/>
            <person name="Beausoleil S.A."/>
            <person name="Villen J."/>
            <person name="Haas W."/>
            <person name="Sowa M.E."/>
            <person name="Gygi S.P."/>
        </authorList>
    </citation>
    <scope>IDENTIFICATION BY MASS SPECTROMETRY [LARGE SCALE ANALYSIS]</scope>
    <source>
        <tissue>Kidney</tissue>
        <tissue>Liver</tissue>
        <tissue>Pancreas</tissue>
        <tissue>Spleen</tissue>
        <tissue>Testis</tissue>
    </source>
</reference>
<organism>
    <name type="scientific">Mus musculus</name>
    <name type="common">Mouse</name>
    <dbReference type="NCBI Taxonomy" id="10090"/>
    <lineage>
        <taxon>Eukaryota</taxon>
        <taxon>Metazoa</taxon>
        <taxon>Chordata</taxon>
        <taxon>Craniata</taxon>
        <taxon>Vertebrata</taxon>
        <taxon>Euteleostomi</taxon>
        <taxon>Mammalia</taxon>
        <taxon>Eutheria</taxon>
        <taxon>Euarchontoglires</taxon>
        <taxon>Glires</taxon>
        <taxon>Rodentia</taxon>
        <taxon>Myomorpha</taxon>
        <taxon>Muroidea</taxon>
        <taxon>Muridae</taxon>
        <taxon>Murinae</taxon>
        <taxon>Mus</taxon>
        <taxon>Mus</taxon>
    </lineage>
</organism>
<keyword id="KW-0025">Alternative splicing</keyword>
<keyword id="KW-0256">Endoplasmic reticulum</keyword>
<keyword id="KW-0325">Glycoprotein</keyword>
<keyword id="KW-0378">Hydrolase</keyword>
<keyword id="KW-0472">Membrane</keyword>
<keyword id="KW-0653">Protein transport</keyword>
<keyword id="KW-1185">Reference proteome</keyword>
<keyword id="KW-0812">Transmembrane</keyword>
<keyword id="KW-1133">Transmembrane helix</keyword>
<keyword id="KW-0813">Transport</keyword>
<name>PGAP1_MOUSE</name>